<organism>
    <name type="scientific">Bos taurus</name>
    <name type="common">Bovine</name>
    <dbReference type="NCBI Taxonomy" id="9913"/>
    <lineage>
        <taxon>Eukaryota</taxon>
        <taxon>Metazoa</taxon>
        <taxon>Chordata</taxon>
        <taxon>Craniata</taxon>
        <taxon>Vertebrata</taxon>
        <taxon>Euteleostomi</taxon>
        <taxon>Mammalia</taxon>
        <taxon>Eutheria</taxon>
        <taxon>Laurasiatheria</taxon>
        <taxon>Artiodactyla</taxon>
        <taxon>Ruminantia</taxon>
        <taxon>Pecora</taxon>
        <taxon>Bovidae</taxon>
        <taxon>Bovinae</taxon>
        <taxon>Bos</taxon>
    </lineage>
</organism>
<reference key="1">
    <citation type="submission" date="2006-06" db="EMBL/GenBank/DDBJ databases">
        <authorList>
            <consortium name="NIH - Mammalian Gene Collection (MGC) project"/>
        </authorList>
    </citation>
    <scope>NUCLEOTIDE SEQUENCE [LARGE SCALE MRNA]</scope>
    <source>
        <strain>Hereford</strain>
        <tissue>Fetal pons</tissue>
    </source>
</reference>
<dbReference type="EMBL" id="BC118437">
    <property type="protein sequence ID" value="AAI18438.1"/>
    <property type="molecule type" value="mRNA"/>
</dbReference>
<dbReference type="RefSeq" id="NP_001069546.1">
    <property type="nucleotide sequence ID" value="NM_001076078.2"/>
</dbReference>
<dbReference type="SMR" id="Q17QC5"/>
<dbReference type="FunCoup" id="Q17QC5">
    <property type="interactions" value="3010"/>
</dbReference>
<dbReference type="STRING" id="9913.ENSBTAP00000074109"/>
<dbReference type="PaxDb" id="9913-ENSBTAP00000013989"/>
<dbReference type="GeneID" id="536553"/>
<dbReference type="KEGG" id="bta:536553"/>
<dbReference type="CTD" id="1175"/>
<dbReference type="VEuPathDB" id="HostDB:ENSBTAG00000010584"/>
<dbReference type="eggNOG" id="KOG0935">
    <property type="taxonomic scope" value="Eukaryota"/>
</dbReference>
<dbReference type="HOGENOM" id="CLU_061221_3_1_1"/>
<dbReference type="InParanoid" id="Q17QC5"/>
<dbReference type="OMA" id="QSNFVEY"/>
<dbReference type="OrthoDB" id="371463at2759"/>
<dbReference type="TreeFam" id="TF300139"/>
<dbReference type="Reactome" id="R-BTA-177504">
    <property type="pathway name" value="Retrograde neurotrophin signalling"/>
</dbReference>
<dbReference type="Reactome" id="R-BTA-2132295">
    <property type="pathway name" value="MHC class II antigen presentation"/>
</dbReference>
<dbReference type="Reactome" id="R-BTA-416993">
    <property type="pathway name" value="Trafficking of GluR2-containing AMPA receptors"/>
</dbReference>
<dbReference type="Reactome" id="R-BTA-437239">
    <property type="pathway name" value="Recycling pathway of L1"/>
</dbReference>
<dbReference type="Reactome" id="R-BTA-5099900">
    <property type="pathway name" value="WNT5A-dependent internalization of FZD4"/>
</dbReference>
<dbReference type="Reactome" id="R-BTA-5140745">
    <property type="pathway name" value="WNT5A-dependent internalization of FZD2, FZD5 and ROR2"/>
</dbReference>
<dbReference type="Reactome" id="R-BTA-8856825">
    <property type="pathway name" value="Cargo recognition for clathrin-mediated endocytosis"/>
</dbReference>
<dbReference type="Reactome" id="R-BTA-8856828">
    <property type="pathway name" value="Clathrin-mediated endocytosis"/>
</dbReference>
<dbReference type="Reactome" id="R-BTA-8866427">
    <property type="pathway name" value="VLDLR internalisation and degradation"/>
</dbReference>
<dbReference type="Reactome" id="R-BTA-8964038">
    <property type="pathway name" value="LDL clearance"/>
</dbReference>
<dbReference type="Proteomes" id="UP000009136">
    <property type="component" value="Chromosome 18"/>
</dbReference>
<dbReference type="Bgee" id="ENSBTAG00000010584">
    <property type="expression patterns" value="Expressed in floor plate of diencephalon and 101 other cell types or tissues"/>
</dbReference>
<dbReference type="GO" id="GO:0030122">
    <property type="term" value="C:AP-2 adaptor complex"/>
    <property type="evidence" value="ECO:0007669"/>
    <property type="project" value="InterPro"/>
</dbReference>
<dbReference type="GO" id="GO:0043231">
    <property type="term" value="C:intracellular membrane-bounded organelle"/>
    <property type="evidence" value="ECO:0000318"/>
    <property type="project" value="GO_Central"/>
</dbReference>
<dbReference type="GO" id="GO:0035615">
    <property type="term" value="F:clathrin adaptor activity"/>
    <property type="evidence" value="ECO:0007669"/>
    <property type="project" value="InterPro"/>
</dbReference>
<dbReference type="GO" id="GO:0072583">
    <property type="term" value="P:clathrin-dependent endocytosis"/>
    <property type="evidence" value="ECO:0007669"/>
    <property type="project" value="InterPro"/>
</dbReference>
<dbReference type="GO" id="GO:0006886">
    <property type="term" value="P:intracellular protein transport"/>
    <property type="evidence" value="ECO:0007669"/>
    <property type="project" value="InterPro"/>
</dbReference>
<dbReference type="GO" id="GO:0016192">
    <property type="term" value="P:vesicle-mediated transport"/>
    <property type="evidence" value="ECO:0000318"/>
    <property type="project" value="GO_Central"/>
</dbReference>
<dbReference type="CDD" id="cd14833">
    <property type="entry name" value="AP2_sigma"/>
    <property type="match status" value="1"/>
</dbReference>
<dbReference type="FunFam" id="3.30.450.60:FF:000004">
    <property type="entry name" value="AP complex subunit sigma"/>
    <property type="match status" value="1"/>
</dbReference>
<dbReference type="Gene3D" id="3.30.450.60">
    <property type="match status" value="1"/>
</dbReference>
<dbReference type="InterPro" id="IPR016635">
    <property type="entry name" value="AP_complex_ssu"/>
</dbReference>
<dbReference type="InterPro" id="IPR022775">
    <property type="entry name" value="AP_mu_sigma_su"/>
</dbReference>
<dbReference type="InterPro" id="IPR027156">
    <property type="entry name" value="APS2"/>
</dbReference>
<dbReference type="InterPro" id="IPR000804">
    <property type="entry name" value="Clathrin_sm-chain_CS"/>
</dbReference>
<dbReference type="InterPro" id="IPR011012">
    <property type="entry name" value="Longin-like_dom_sf"/>
</dbReference>
<dbReference type="PANTHER" id="PTHR11753">
    <property type="entry name" value="ADAPTOR COMPLEXES SMALL SUBUNIT FAMILY"/>
    <property type="match status" value="1"/>
</dbReference>
<dbReference type="Pfam" id="PF01217">
    <property type="entry name" value="Clat_adaptor_s"/>
    <property type="match status" value="1"/>
</dbReference>
<dbReference type="PIRSF" id="PIRSF015588">
    <property type="entry name" value="AP_complex_sigma"/>
    <property type="match status" value="1"/>
</dbReference>
<dbReference type="SUPFAM" id="SSF64356">
    <property type="entry name" value="SNARE-like"/>
    <property type="match status" value="1"/>
</dbReference>
<dbReference type="PROSITE" id="PS00989">
    <property type="entry name" value="CLAT_ADAPTOR_S"/>
    <property type="match status" value="1"/>
</dbReference>
<keyword id="KW-1003">Cell membrane</keyword>
<keyword id="KW-0168">Coated pit</keyword>
<keyword id="KW-0254">Endocytosis</keyword>
<keyword id="KW-0472">Membrane</keyword>
<keyword id="KW-0597">Phosphoprotein</keyword>
<keyword id="KW-0653">Protein transport</keyword>
<keyword id="KW-1185">Reference proteome</keyword>
<keyword id="KW-0813">Transport</keyword>
<comment type="function">
    <text evidence="1">Component of the adaptor protein complex 2 (AP-2). Adaptor protein complexes function in protein Transport via Transport vesicles in different membrane traffic pathways. Adaptor protein complexes are vesicle coat components and appear to be involved in cargo selection and vesicle formation. AP-2 is involved in clathrin-dependent endocytosis in which cargo proteins are incorporated into vesicles surrounded by clathrin (clathrin-coated vesicles, CCVs) which are destined for fusion with the early endosome. The clathrin lattice serves as a mechanical scaffold but is itself unable to bind directly to membrane components. Clathrin-associated adaptor protein (AP) complexes which can bind directly to both the clathrin lattice and to the lipid and protein components of membranes are considered to be the major clathrin adaptors contributing the CCV formation. AP-2 also serves as a cargo receptor to selectively sort the membrane proteins involved in receptor-mediated endocytosis. AP-2 seems to play a role in the recycling of synaptic vesicle membranes from the presynaptic surface. AP-2 recognizes Y-X-X-[FILMV] (Y-X-X-Phi) and [ED]-X-X-X-L-[LI] endocytosis signal motifs within the cytosolic tails of transmembrane cargo molecules. AP-2 may also play a role in maintaining normal post-endocytic trafficking through the ARF6-regulated, non-clathrin pathway. The AP-2 alpha and AP-2 sigma subunits are thought to contribute to the recognition of the [ED]-X-X-X-L-[LI] motif. May also play a role in extracellular calcium homeostasis (By similarity).</text>
</comment>
<comment type="subunit">
    <text evidence="2">Adaptor protein complex 2 (AP-2) is a heterotetramer composed of two large adaptins (alpha-type subunit AP2A1 or AP2A2 and beta-type subunit AP2B1), a medium adaptin (mu-type subunit AP2M1) and a small adaptin (sigma-type subunit AP2S1). Interacts with CCDC32; the interaction is direct and mediates association of CCDC32 with adaptor protein complex 2 (AP-2).</text>
</comment>
<comment type="subcellular location">
    <subcellularLocation>
        <location evidence="3">Cell membrane</location>
    </subcellularLocation>
    <subcellularLocation>
        <location evidence="2">Membrane</location>
        <location evidence="2">Coated pit</location>
        <topology evidence="2">Peripheral membrane protein</topology>
        <orientation evidence="2">Cytoplasmic side</orientation>
    </subcellularLocation>
    <text evidence="3">AP-2 appears to be excluded from internalizing CCVs and to disengage from sites of endocytosis seconds before internalization of the nascent CCV.</text>
</comment>
<comment type="similarity">
    <text evidence="4">Belongs to the adaptor complexes small subunit family.</text>
</comment>
<gene>
    <name type="primary">AP2S1</name>
</gene>
<accession>Q17QC5</accession>
<sequence length="142" mass="17018">MIRFILIQNRAGKTRLAKWYMQFDDDEKQKLIEEVHAVVTVRDAKHTNFVEFRNFKIIYRRYAGLYFCICVDVNDNNLAYLEAIHNFVEVLNEYFHNVCELDLVFNFYKVYTVVDEMFLAGEIRETSQTKVLKQLLMLQSLE</sequence>
<evidence type="ECO:0000250" key="1"/>
<evidence type="ECO:0000250" key="2">
    <source>
        <dbReference type="UniProtKB" id="P53680"/>
    </source>
</evidence>
<evidence type="ECO:0000250" key="3">
    <source>
        <dbReference type="UniProtKB" id="P63010"/>
    </source>
</evidence>
<evidence type="ECO:0000305" key="4"/>
<protein>
    <recommendedName>
        <fullName>AP-2 complex subunit sigma</fullName>
    </recommendedName>
    <alternativeName>
        <fullName>Adaptor protein complex AP-2 subunit sigma</fullName>
    </alternativeName>
    <alternativeName>
        <fullName>Adaptor-related protein complex 2 subunit sigma</fullName>
    </alternativeName>
    <alternativeName>
        <fullName>Clathrin assembly protein 2 sigma small chain</fullName>
    </alternativeName>
    <alternativeName>
        <fullName>Clathrin coat assembly protein AP17</fullName>
    </alternativeName>
    <alternativeName>
        <fullName>Clathrin coat-associated protein AP17</fullName>
    </alternativeName>
    <alternativeName>
        <fullName>Plasma membrane adaptor AP-2 17 kDa protein</fullName>
    </alternativeName>
    <alternativeName>
        <fullName>Sigma2-adaptin</fullName>
    </alternativeName>
</protein>
<feature type="chain" id="PRO_0000283805" description="AP-2 complex subunit sigma">
    <location>
        <begin position="1"/>
        <end position="142"/>
    </location>
</feature>
<feature type="modified residue" description="Phosphoserine" evidence="2">
    <location>
        <position position="140"/>
    </location>
</feature>
<name>AP2S1_BOVIN</name>
<proteinExistence type="evidence at transcript level"/>